<proteinExistence type="evidence at protein level"/>
<accession>Q8WUY8</accession>
<accession>Q8TDY7</accession>
<accession>Q9NS72</accession>
<dbReference type="EC" id="2.3.1.-" evidence="4"/>
<dbReference type="EMBL" id="AB038651">
    <property type="protein sequence ID" value="BAB03716.1"/>
    <property type="molecule type" value="mRNA"/>
</dbReference>
<dbReference type="EMBL" id="AB055059">
    <property type="protein sequence ID" value="BAB85857.1"/>
    <property type="molecule type" value="Genomic_DNA"/>
</dbReference>
<dbReference type="EMBL" id="BC019079">
    <property type="protein sequence ID" value="AAH19079.1"/>
    <property type="molecule type" value="mRNA"/>
</dbReference>
<dbReference type="CCDS" id="CCDS12926.1"/>
<dbReference type="PIR" id="JC7320">
    <property type="entry name" value="JC7320"/>
</dbReference>
<dbReference type="RefSeq" id="NP_065111.1">
    <property type="nucleotide sequence ID" value="NM_020378.4"/>
</dbReference>
<dbReference type="BioGRID" id="121372">
    <property type="interactions" value="94"/>
</dbReference>
<dbReference type="FunCoup" id="Q8WUY8">
    <property type="interactions" value="1436"/>
</dbReference>
<dbReference type="IntAct" id="Q8WUY8">
    <property type="interactions" value="61"/>
</dbReference>
<dbReference type="MINT" id="Q8WUY8"/>
<dbReference type="STRING" id="9606.ENSP00000205194"/>
<dbReference type="GlyGen" id="Q8WUY8">
    <property type="glycosylation" value="1 site, 1 O-linked glycan (1 site)"/>
</dbReference>
<dbReference type="PhosphoSitePlus" id="Q8WUY8"/>
<dbReference type="SwissPalm" id="Q8WUY8"/>
<dbReference type="BioMuta" id="NAT14"/>
<dbReference type="DMDM" id="74730785"/>
<dbReference type="jPOST" id="Q8WUY8"/>
<dbReference type="MassIVE" id="Q8WUY8"/>
<dbReference type="PaxDb" id="9606-ENSP00000205194"/>
<dbReference type="PeptideAtlas" id="Q8WUY8"/>
<dbReference type="ProteomicsDB" id="74727"/>
<dbReference type="Pumba" id="Q8WUY8"/>
<dbReference type="Antibodypedia" id="33111">
    <property type="antibodies" value="89 antibodies from 17 providers"/>
</dbReference>
<dbReference type="DNASU" id="57106"/>
<dbReference type="Ensembl" id="ENST00000205194.5">
    <property type="protein sequence ID" value="ENSP00000205194.3"/>
    <property type="gene ID" value="ENSG00000090971.5"/>
</dbReference>
<dbReference type="GeneID" id="57106"/>
<dbReference type="KEGG" id="hsa:57106"/>
<dbReference type="MANE-Select" id="ENST00000205194.5">
    <property type="protein sequence ID" value="ENSP00000205194.3"/>
    <property type="RefSeq nucleotide sequence ID" value="NM_020378.4"/>
    <property type="RefSeq protein sequence ID" value="NP_065111.1"/>
</dbReference>
<dbReference type="UCSC" id="uc002qle.3">
    <property type="organism name" value="human"/>
</dbReference>
<dbReference type="AGR" id="HGNC:28918"/>
<dbReference type="CTD" id="57106"/>
<dbReference type="DisGeNET" id="57106"/>
<dbReference type="GeneCards" id="NAT14"/>
<dbReference type="HGNC" id="HGNC:28918">
    <property type="gene designation" value="NAT14"/>
</dbReference>
<dbReference type="HPA" id="ENSG00000090971">
    <property type="expression patterns" value="Tissue enhanced (brain)"/>
</dbReference>
<dbReference type="neXtProt" id="NX_Q8WUY8"/>
<dbReference type="OpenTargets" id="ENSG00000090971"/>
<dbReference type="PharmGKB" id="PA162396977"/>
<dbReference type="VEuPathDB" id="HostDB:ENSG00000090971"/>
<dbReference type="eggNOG" id="ENOG502RYNT">
    <property type="taxonomic scope" value="Eukaryota"/>
</dbReference>
<dbReference type="GeneTree" id="ENSGT00950000182932"/>
<dbReference type="HOGENOM" id="CLU_127402_0_0_1"/>
<dbReference type="InParanoid" id="Q8WUY8"/>
<dbReference type="OMA" id="PWVAVWG"/>
<dbReference type="OrthoDB" id="41532at2759"/>
<dbReference type="PAN-GO" id="Q8WUY8">
    <property type="GO annotations" value="1 GO annotation based on evolutionary models"/>
</dbReference>
<dbReference type="PhylomeDB" id="Q8WUY8"/>
<dbReference type="TreeFam" id="TF336981"/>
<dbReference type="PathwayCommons" id="Q8WUY8"/>
<dbReference type="SignaLink" id="Q8WUY8"/>
<dbReference type="BioGRID-ORCS" id="57106">
    <property type="hits" value="13 hits in 1165 CRISPR screens"/>
</dbReference>
<dbReference type="ChiTaRS" id="NAT14">
    <property type="organism name" value="human"/>
</dbReference>
<dbReference type="GenomeRNAi" id="57106"/>
<dbReference type="Pharos" id="Q8WUY8">
    <property type="development level" value="Tbio"/>
</dbReference>
<dbReference type="PRO" id="PR:Q8WUY8"/>
<dbReference type="Proteomes" id="UP000005640">
    <property type="component" value="Chromosome 19"/>
</dbReference>
<dbReference type="RNAct" id="Q8WUY8">
    <property type="molecule type" value="protein"/>
</dbReference>
<dbReference type="Bgee" id="ENSG00000090971">
    <property type="expression patterns" value="Expressed in right hemisphere of cerebellum and 157 other cell types or tissues"/>
</dbReference>
<dbReference type="ExpressionAtlas" id="Q8WUY8">
    <property type="expression patterns" value="baseline and differential"/>
</dbReference>
<dbReference type="GO" id="GO:0016020">
    <property type="term" value="C:membrane"/>
    <property type="evidence" value="ECO:0007669"/>
    <property type="project" value="UniProtKB-SubCell"/>
</dbReference>
<dbReference type="GO" id="GO:0005634">
    <property type="term" value="C:nucleus"/>
    <property type="evidence" value="ECO:0000303"/>
    <property type="project" value="UniProtKB"/>
</dbReference>
<dbReference type="GO" id="GO:0003677">
    <property type="term" value="F:DNA binding"/>
    <property type="evidence" value="ECO:0007669"/>
    <property type="project" value="UniProtKB-KW"/>
</dbReference>
<dbReference type="GO" id="GO:0008080">
    <property type="term" value="F:N-acetyltransferase activity"/>
    <property type="evidence" value="ECO:0000318"/>
    <property type="project" value="GO_Central"/>
</dbReference>
<dbReference type="GO" id="GO:0006352">
    <property type="term" value="P:DNA-templated transcription initiation"/>
    <property type="evidence" value="ECO:0000303"/>
    <property type="project" value="UniProtKB"/>
</dbReference>
<dbReference type="GO" id="GO:0045893">
    <property type="term" value="P:positive regulation of DNA-templated transcription"/>
    <property type="evidence" value="ECO:0000303"/>
    <property type="project" value="UniProtKB"/>
</dbReference>
<dbReference type="Gene3D" id="3.40.630.30">
    <property type="match status" value="1"/>
</dbReference>
<dbReference type="InterPro" id="IPR016181">
    <property type="entry name" value="Acyl_CoA_acyltransferase"/>
</dbReference>
<dbReference type="InterPro" id="IPR000182">
    <property type="entry name" value="GNAT_dom"/>
</dbReference>
<dbReference type="InterPro" id="IPR050769">
    <property type="entry name" value="NAT_camello-type"/>
</dbReference>
<dbReference type="PANTHER" id="PTHR13947">
    <property type="entry name" value="GNAT FAMILY N-ACETYLTRANSFERASE"/>
    <property type="match status" value="1"/>
</dbReference>
<dbReference type="PANTHER" id="PTHR13947:SF51">
    <property type="entry name" value="N-ACETYLTRANSFERASE 14-RELATED"/>
    <property type="match status" value="1"/>
</dbReference>
<dbReference type="Pfam" id="PF00583">
    <property type="entry name" value="Acetyltransf_1"/>
    <property type="match status" value="1"/>
</dbReference>
<dbReference type="SUPFAM" id="SSF55729">
    <property type="entry name" value="Acyl-CoA N-acyltransferases (Nat)"/>
    <property type="match status" value="1"/>
</dbReference>
<dbReference type="PROSITE" id="PS51186">
    <property type="entry name" value="GNAT"/>
    <property type="match status" value="1"/>
</dbReference>
<sequence length="206" mass="21650">MAPSHLSVREMREDEKPLVLEMLKAGVKDTENRVALHALTRPPALLLLAAASSGLRFVLASFALALLLPVFLAVAAVKLGLRARWGSLPPPGGLGGPWVAVRGSGDVCGVLALAPGTNAGDGARVTRLSVSRWHRRRGVGRRLLAFAEARARAWAGGMGEPRARLVVPVAVAAWGVGGMLEGCGYQAEGGWGCLGYTLVREFSKDL</sequence>
<name>NAT14_HUMAN</name>
<keyword id="KW-0010">Activator</keyword>
<keyword id="KW-0012">Acyltransferase</keyword>
<keyword id="KW-0238">DNA-binding</keyword>
<keyword id="KW-0472">Membrane</keyword>
<keyword id="KW-1267">Proteomics identification</keyword>
<keyword id="KW-1185">Reference proteome</keyword>
<keyword id="KW-0804">Transcription</keyword>
<keyword id="KW-0805">Transcription regulation</keyword>
<keyword id="KW-0808">Transferase</keyword>
<keyword id="KW-0812">Transmembrane</keyword>
<keyword id="KW-1133">Transmembrane helix</keyword>
<reference key="1">
    <citation type="journal article" date="2000" name="Biochem. Biophys. Res. Commun.">
        <title>Cloning of a coproporphyrinogen oxidase promoter regulatory element binding protein.</title>
        <authorList>
            <person name="Takahashi S."/>
            <person name="Furuyama K."/>
            <person name="Kobayashi A."/>
            <person name="Taketani S."/>
            <person name="Harigae H."/>
            <person name="Yamamoto M."/>
            <person name="Igarashi K."/>
            <person name="Sasaki T."/>
            <person name="Hayashi N."/>
        </authorList>
    </citation>
    <scope>NUCLEOTIDE SEQUENCE [MRNA]</scope>
    <scope>POSSIBLE FUNCTION</scope>
    <scope>DNA-BINDING</scope>
    <scope>TISSUE SPECIFICITY</scope>
</reference>
<reference key="2">
    <citation type="journal article" date="2001" name="Biochim. Biophys. Acta">
        <title>Genomic structure and regulation of a novel human gene, Klp1.</title>
        <authorList>
            <person name="Takahashi S."/>
            <person name="Harigae H."/>
            <person name="Yokoyama H."/>
            <person name="Kaku M."/>
            <person name="Sasaki T."/>
        </authorList>
    </citation>
    <scope>NUCLEOTIDE SEQUENCE [GENOMIC DNA]</scope>
</reference>
<reference key="3">
    <citation type="journal article" date="2004" name="Genome Res.">
        <title>The status, quality, and expansion of the NIH full-length cDNA project: the Mammalian Gene Collection (MGC).</title>
        <authorList>
            <consortium name="The MGC Project Team"/>
        </authorList>
    </citation>
    <scope>NUCLEOTIDE SEQUENCE [LARGE SCALE MRNA]</scope>
    <source>
        <tissue>Kidney</tissue>
    </source>
</reference>
<comment type="function">
    <text evidence="4">Probable acetyltransferase.</text>
</comment>
<comment type="function">
    <text evidence="3">May act as a transcription factor that regulates the expression of coproporphyrinogen oxidase by binding to a promoter regulatory element.</text>
</comment>
<comment type="interaction">
    <interactant intactId="EBI-3919010">
        <id>Q8WUY8</id>
    </interactant>
    <interactant intactId="EBI-594747">
        <id>P40855</id>
        <label>PEX19</label>
    </interactant>
    <organismsDiffer>false</organismsDiffer>
    <experiments>5</experiments>
</comment>
<comment type="subcellular location">
    <subcellularLocation>
        <location evidence="4">Membrane</location>
        <topology evidence="4">Single-pass membrane protein</topology>
    </subcellularLocation>
</comment>
<comment type="tissue specificity">
    <text evidence="3">Expressed in K-562 and HeLa cell lines and in brain.</text>
</comment>
<comment type="similarity">
    <text evidence="4">Belongs to the camello family.</text>
</comment>
<protein>
    <recommendedName>
        <fullName>Probable N-acetyltransferase 14</fullName>
        <ecNumber evidence="4">2.3.1.-</ecNumber>
    </recommendedName>
    <alternativeName>
        <fullName>K562 cell-derived leucine-zipper-like protein 1</fullName>
    </alternativeName>
</protein>
<gene>
    <name type="primary">NAT14</name>
    <name type="synonym">KLP1</name>
</gene>
<feature type="chain" id="PRO_0000307786" description="Probable N-acetyltransferase 14">
    <location>
        <begin position="1"/>
        <end position="206"/>
    </location>
</feature>
<feature type="transmembrane region" description="Helical" evidence="1">
    <location>
        <begin position="57"/>
        <end position="77"/>
    </location>
</feature>
<feature type="domain" description="N-acetyltransferase" evidence="2">
    <location>
        <begin position="6"/>
        <end position="206"/>
    </location>
</feature>
<feature type="sequence conflict" description="In Ref. 2; BAB85857." evidence="4" ref="2">
    <location>
        <begin position="21"/>
        <end position="24"/>
    </location>
</feature>
<feature type="sequence conflict" description="In Ref. 1; BAB03716." evidence="4" ref="1">
    <original>A</original>
    <variation>V</variation>
    <location>
        <position position="187"/>
    </location>
</feature>
<organism>
    <name type="scientific">Homo sapiens</name>
    <name type="common">Human</name>
    <dbReference type="NCBI Taxonomy" id="9606"/>
    <lineage>
        <taxon>Eukaryota</taxon>
        <taxon>Metazoa</taxon>
        <taxon>Chordata</taxon>
        <taxon>Craniata</taxon>
        <taxon>Vertebrata</taxon>
        <taxon>Euteleostomi</taxon>
        <taxon>Mammalia</taxon>
        <taxon>Eutheria</taxon>
        <taxon>Euarchontoglires</taxon>
        <taxon>Primates</taxon>
        <taxon>Haplorrhini</taxon>
        <taxon>Catarrhini</taxon>
        <taxon>Hominidae</taxon>
        <taxon>Homo</taxon>
    </lineage>
</organism>
<evidence type="ECO:0000255" key="1"/>
<evidence type="ECO:0000255" key="2">
    <source>
        <dbReference type="PROSITE-ProRule" id="PRU00532"/>
    </source>
</evidence>
<evidence type="ECO:0000269" key="3">
    <source>
    </source>
</evidence>
<evidence type="ECO:0000305" key="4"/>